<gene>
    <name evidence="1" type="primary">tal</name>
    <name type="ordered locus">HPAG1_1418</name>
</gene>
<dbReference type="EC" id="2.2.1.2" evidence="1"/>
<dbReference type="EMBL" id="CP000241">
    <property type="protein sequence ID" value="ABF85485.1"/>
    <property type="molecule type" value="Genomic_DNA"/>
</dbReference>
<dbReference type="RefSeq" id="WP_001155089.1">
    <property type="nucleotide sequence ID" value="NC_008086.1"/>
</dbReference>
<dbReference type="SMR" id="Q1CRD7"/>
<dbReference type="KEGG" id="hpa:HPAG1_1418"/>
<dbReference type="HOGENOM" id="CLU_050771_1_0_7"/>
<dbReference type="UniPathway" id="UPA00115">
    <property type="reaction ID" value="UER00414"/>
</dbReference>
<dbReference type="GO" id="GO:0005737">
    <property type="term" value="C:cytoplasm"/>
    <property type="evidence" value="ECO:0007669"/>
    <property type="project" value="UniProtKB-SubCell"/>
</dbReference>
<dbReference type="GO" id="GO:0004801">
    <property type="term" value="F:transaldolase activity"/>
    <property type="evidence" value="ECO:0007669"/>
    <property type="project" value="UniProtKB-UniRule"/>
</dbReference>
<dbReference type="GO" id="GO:0005975">
    <property type="term" value="P:carbohydrate metabolic process"/>
    <property type="evidence" value="ECO:0007669"/>
    <property type="project" value="InterPro"/>
</dbReference>
<dbReference type="GO" id="GO:0006098">
    <property type="term" value="P:pentose-phosphate shunt"/>
    <property type="evidence" value="ECO:0007669"/>
    <property type="project" value="UniProtKB-UniRule"/>
</dbReference>
<dbReference type="CDD" id="cd00955">
    <property type="entry name" value="Transaldolase_like"/>
    <property type="match status" value="1"/>
</dbReference>
<dbReference type="Gene3D" id="3.20.20.70">
    <property type="entry name" value="Aldolase class I"/>
    <property type="match status" value="1"/>
</dbReference>
<dbReference type="HAMAP" id="MF_00493">
    <property type="entry name" value="Transaldolase_2"/>
    <property type="match status" value="1"/>
</dbReference>
<dbReference type="InterPro" id="IPR013785">
    <property type="entry name" value="Aldolase_TIM"/>
</dbReference>
<dbReference type="InterPro" id="IPR001585">
    <property type="entry name" value="TAL/FSA"/>
</dbReference>
<dbReference type="InterPro" id="IPR004732">
    <property type="entry name" value="Transaldolase_2"/>
</dbReference>
<dbReference type="InterPro" id="IPR018225">
    <property type="entry name" value="Transaldolase_AS"/>
</dbReference>
<dbReference type="NCBIfam" id="NF003026">
    <property type="entry name" value="PRK03903.1"/>
    <property type="match status" value="1"/>
</dbReference>
<dbReference type="NCBIfam" id="TIGR00876">
    <property type="entry name" value="tal_mycobact"/>
    <property type="match status" value="1"/>
</dbReference>
<dbReference type="PANTHER" id="PTHR10683">
    <property type="entry name" value="TRANSALDOLASE"/>
    <property type="match status" value="1"/>
</dbReference>
<dbReference type="PANTHER" id="PTHR10683:SF31">
    <property type="entry name" value="TRANSALDOLASE"/>
    <property type="match status" value="1"/>
</dbReference>
<dbReference type="Pfam" id="PF00923">
    <property type="entry name" value="TAL_FSA"/>
    <property type="match status" value="1"/>
</dbReference>
<dbReference type="PIRSF" id="PIRSF036915">
    <property type="entry name" value="Trnald_Bac_Plnt"/>
    <property type="match status" value="1"/>
</dbReference>
<dbReference type="SUPFAM" id="SSF51569">
    <property type="entry name" value="Aldolase"/>
    <property type="match status" value="1"/>
</dbReference>
<dbReference type="PROSITE" id="PS01054">
    <property type="entry name" value="TRANSALDOLASE_1"/>
    <property type="match status" value="1"/>
</dbReference>
<dbReference type="PROSITE" id="PS00958">
    <property type="entry name" value="TRANSALDOLASE_2"/>
    <property type="match status" value="1"/>
</dbReference>
<sequence length="316" mass="35235">MQEFSLWCDFIERDFLENDFLKLINKGAICGATSNPSLFCEAITKSAFYQDEIAKLKGKKAKEIYETLALKDILQASSALMPLYEKDPNNGYISLEIDPFLEDDAIKSIDEAKRLFKTLNRPNVMIKVPASESGLEVISALAQASIPINVTLVFSPKIAGEIAQILAKEAQKRAVISVFVSRFDKEIDPLAPQNLQAQSGIMNATECYYQINQHANKLISALFASTGVKSNALAKDYYIKALCFKNSINTAPLEALNAYLLDPNTEYQTPLKITEIEAFKKELKAHNIDLENTAQKLLKEGLIAFKQSFEKLLSSF</sequence>
<evidence type="ECO:0000255" key="1">
    <source>
        <dbReference type="HAMAP-Rule" id="MF_00493"/>
    </source>
</evidence>
<feature type="chain" id="PRO_1000026525" description="Transaldolase">
    <location>
        <begin position="1"/>
        <end position="316"/>
    </location>
</feature>
<feature type="active site" description="Schiff-base intermediate with substrate" evidence="1">
    <location>
        <position position="127"/>
    </location>
</feature>
<keyword id="KW-0963">Cytoplasm</keyword>
<keyword id="KW-0570">Pentose shunt</keyword>
<keyword id="KW-0704">Schiff base</keyword>
<keyword id="KW-0808">Transferase</keyword>
<accession>Q1CRD7</accession>
<proteinExistence type="inferred from homology"/>
<protein>
    <recommendedName>
        <fullName evidence="1">Transaldolase</fullName>
        <ecNumber evidence="1">2.2.1.2</ecNumber>
    </recommendedName>
</protein>
<comment type="function">
    <text evidence="1">Transaldolase is important for the balance of metabolites in the pentose-phosphate pathway.</text>
</comment>
<comment type="catalytic activity">
    <reaction evidence="1">
        <text>D-sedoheptulose 7-phosphate + D-glyceraldehyde 3-phosphate = D-erythrose 4-phosphate + beta-D-fructose 6-phosphate</text>
        <dbReference type="Rhea" id="RHEA:17053"/>
        <dbReference type="ChEBI" id="CHEBI:16897"/>
        <dbReference type="ChEBI" id="CHEBI:57483"/>
        <dbReference type="ChEBI" id="CHEBI:57634"/>
        <dbReference type="ChEBI" id="CHEBI:59776"/>
        <dbReference type="EC" id="2.2.1.2"/>
    </reaction>
</comment>
<comment type="pathway">
    <text evidence="1">Carbohydrate degradation; pentose phosphate pathway; D-glyceraldehyde 3-phosphate and beta-D-fructose 6-phosphate from D-ribose 5-phosphate and D-xylulose 5-phosphate (non-oxidative stage): step 2/3.</text>
</comment>
<comment type="subcellular location">
    <subcellularLocation>
        <location evidence="1">Cytoplasm</location>
    </subcellularLocation>
</comment>
<comment type="similarity">
    <text evidence="1">Belongs to the transaldolase family. Type 2 subfamily.</text>
</comment>
<reference key="1">
    <citation type="journal article" date="2006" name="Proc. Natl. Acad. Sci. U.S.A.">
        <title>The complete genome sequence of a chronic atrophic gastritis Helicobacter pylori strain: evolution during disease progression.</title>
        <authorList>
            <person name="Oh J.D."/>
            <person name="Kling-Baeckhed H."/>
            <person name="Giannakis M."/>
            <person name="Xu J."/>
            <person name="Fulton R.S."/>
            <person name="Fulton L.A."/>
            <person name="Cordum H.S."/>
            <person name="Wang C."/>
            <person name="Elliott G."/>
            <person name="Edwards J."/>
            <person name="Mardis E.R."/>
            <person name="Engstrand L.G."/>
            <person name="Gordon J.I."/>
        </authorList>
    </citation>
    <scope>NUCLEOTIDE SEQUENCE [LARGE SCALE GENOMIC DNA]</scope>
    <source>
        <strain>HPAG1</strain>
    </source>
</reference>
<organism>
    <name type="scientific">Helicobacter pylori (strain HPAG1)</name>
    <dbReference type="NCBI Taxonomy" id="357544"/>
    <lineage>
        <taxon>Bacteria</taxon>
        <taxon>Pseudomonadati</taxon>
        <taxon>Campylobacterota</taxon>
        <taxon>Epsilonproteobacteria</taxon>
        <taxon>Campylobacterales</taxon>
        <taxon>Helicobacteraceae</taxon>
        <taxon>Helicobacter</taxon>
    </lineage>
</organism>
<name>TAL_HELPH</name>